<gene>
    <name type="primary">Cep43</name>
    <name type="synonym">Fgfr1op</name>
</gene>
<accession>Q4V7C1</accession>
<protein>
    <recommendedName>
        <fullName evidence="5">Centrosomal protein 43</fullName>
    </recommendedName>
    <alternativeName>
        <fullName>FGFR1 oncogene partner</fullName>
    </alternativeName>
</protein>
<evidence type="ECO:0000250" key="1">
    <source>
        <dbReference type="UniProtKB" id="O95684"/>
    </source>
</evidence>
<evidence type="ECO:0000250" key="2">
    <source>
        <dbReference type="UniProtKB" id="Q66JX5"/>
    </source>
</evidence>
<evidence type="ECO:0000255" key="3">
    <source>
        <dbReference type="PROSITE-ProRule" id="PRU00126"/>
    </source>
</evidence>
<evidence type="ECO:0000256" key="4">
    <source>
        <dbReference type="SAM" id="MobiDB-lite"/>
    </source>
</evidence>
<evidence type="ECO:0000305" key="5"/>
<evidence type="ECO:0007744" key="6">
    <source>
    </source>
</evidence>
<feature type="chain" id="PRO_0000233296" description="Centrosomal protein 43">
    <location>
        <begin position="1"/>
        <end position="399"/>
    </location>
</feature>
<feature type="domain" description="LisH" evidence="3">
    <location>
        <begin position="70"/>
        <end position="102"/>
    </location>
</feature>
<feature type="region of interest" description="Disordered" evidence="4">
    <location>
        <begin position="139"/>
        <end position="217"/>
    </location>
</feature>
<feature type="region of interest" description="Disordered" evidence="4">
    <location>
        <begin position="239"/>
        <end position="309"/>
    </location>
</feature>
<feature type="region of interest" description="Disordered" evidence="4">
    <location>
        <begin position="328"/>
        <end position="357"/>
    </location>
</feature>
<feature type="compositionally biased region" description="Polar residues" evidence="4">
    <location>
        <begin position="163"/>
        <end position="172"/>
    </location>
</feature>
<feature type="compositionally biased region" description="Basic residues" evidence="4">
    <location>
        <begin position="175"/>
        <end position="186"/>
    </location>
</feature>
<feature type="compositionally biased region" description="Low complexity" evidence="4">
    <location>
        <begin position="197"/>
        <end position="217"/>
    </location>
</feature>
<feature type="compositionally biased region" description="Acidic residues" evidence="4">
    <location>
        <begin position="245"/>
        <end position="256"/>
    </location>
</feature>
<feature type="compositionally biased region" description="Basic and acidic residues" evidence="4">
    <location>
        <begin position="259"/>
        <end position="275"/>
    </location>
</feature>
<feature type="compositionally biased region" description="Low complexity" evidence="4">
    <location>
        <begin position="290"/>
        <end position="302"/>
    </location>
</feature>
<feature type="modified residue" description="Phosphothreonine" evidence="1">
    <location>
        <position position="143"/>
    </location>
</feature>
<feature type="modified residue" description="Phosphoserine" evidence="1">
    <location>
        <position position="152"/>
    </location>
</feature>
<feature type="modified residue" description="Phosphoserine" evidence="1">
    <location>
        <position position="160"/>
    </location>
</feature>
<feature type="modified residue" description="Phosphothreonine" evidence="1">
    <location>
        <position position="170"/>
    </location>
</feature>
<feature type="modified residue" description="Phosphoserine" evidence="1">
    <location>
        <position position="202"/>
    </location>
</feature>
<feature type="modified residue" description="Phosphothreonine" evidence="1">
    <location>
        <position position="234"/>
    </location>
</feature>
<feature type="modified residue" description="Phosphoserine" evidence="1">
    <location>
        <position position="301"/>
    </location>
</feature>
<feature type="modified residue" description="Phosphoserine" evidence="1">
    <location>
        <position position="326"/>
    </location>
</feature>
<feature type="modified residue" description="Phosphoserine" evidence="6">
    <location>
        <position position="331"/>
    </location>
</feature>
<feature type="modified residue" description="Phosphotyrosine" evidence="2">
    <location>
        <position position="337"/>
    </location>
</feature>
<reference key="1">
    <citation type="journal article" date="2004" name="Genome Res.">
        <title>The status, quality, and expansion of the NIH full-length cDNA project: the Mammalian Gene Collection (MGC).</title>
        <authorList>
            <consortium name="The MGC Project Team"/>
        </authorList>
    </citation>
    <scope>NUCLEOTIDE SEQUENCE [LARGE SCALE MRNA]</scope>
    <source>
        <tissue>Testis</tissue>
    </source>
</reference>
<reference key="2">
    <citation type="journal article" date="2012" name="Nat. Commun.">
        <title>Quantitative maps of protein phosphorylation sites across 14 different rat organs and tissues.</title>
        <authorList>
            <person name="Lundby A."/>
            <person name="Secher A."/>
            <person name="Lage K."/>
            <person name="Nordsborg N.B."/>
            <person name="Dmytriyev A."/>
            <person name="Lundby C."/>
            <person name="Olsen J.V."/>
        </authorList>
    </citation>
    <scope>PHOSPHORYLATION [LARGE SCALE ANALYSIS] AT SER-331</scope>
    <scope>IDENTIFICATION BY MASS SPECTROMETRY [LARGE SCALE ANALYSIS]</scope>
</reference>
<proteinExistence type="evidence at protein level"/>
<comment type="function">
    <text evidence="1">Required for anchoring microtubules to the centrosomes. Required for ciliation.</text>
</comment>
<comment type="subunit">
    <text evidence="1">Homodimer. Part of a ternary complex that contains CEP350, CEP43 and MAPRE1. Interacts directly with CEP350 and MAPRE1. Interacts with CEP19. Interacts (via N-terminus) with CEP350 (via C-terminus).</text>
</comment>
<comment type="subcellular location">
    <subcellularLocation>
        <location evidence="1">Cytoplasm</location>
        <location evidence="1">Cytoskeleton</location>
        <location evidence="1">Microtubule organizing center</location>
        <location evidence="1">Centrosome</location>
    </subcellularLocation>
    <subcellularLocation>
        <location evidence="1">Cytoplasm</location>
        <location evidence="1">Cytoskeleton</location>
        <location evidence="1">Microtubule organizing center</location>
        <location evidence="1">Centrosome</location>
        <location evidence="1">Centriole</location>
    </subcellularLocation>
    <subcellularLocation>
        <location evidence="1">Cytoplasm</location>
        <location evidence="1">Cytoskeleton</location>
        <location evidence="1">Cilium basal body</location>
    </subcellularLocation>
    <text evidence="1">Associated with gamma-tubulin. Localizes on both mother and daughter centrioles. Localizes to an axial position on the mother centriole. Localizes to the distal end of the centriole partly to the subdistal appendage region.</text>
</comment>
<comment type="similarity">
    <text evidence="5">Belongs to the CEP43 family.</text>
</comment>
<name>CEP43_RAT</name>
<dbReference type="EMBL" id="BC098026">
    <property type="protein sequence ID" value="AAH98026.1"/>
    <property type="molecule type" value="mRNA"/>
</dbReference>
<dbReference type="RefSeq" id="NP_001094478.1">
    <property type="nucleotide sequence ID" value="NM_001101008.1"/>
</dbReference>
<dbReference type="SMR" id="Q4V7C1"/>
<dbReference type="FunCoup" id="Q4V7C1">
    <property type="interactions" value="1454"/>
</dbReference>
<dbReference type="STRING" id="10116.ENSRNOP00000070312"/>
<dbReference type="iPTMnet" id="Q4V7C1"/>
<dbReference type="PhosphoSitePlus" id="Q4V7C1"/>
<dbReference type="jPOST" id="Q4V7C1"/>
<dbReference type="PaxDb" id="10116-ENSRNOP00000017590"/>
<dbReference type="GeneID" id="683722"/>
<dbReference type="KEGG" id="rno:683722"/>
<dbReference type="AGR" id="RGD:1583370"/>
<dbReference type="CTD" id="11116"/>
<dbReference type="RGD" id="1583370">
    <property type="gene designation" value="Cep43"/>
</dbReference>
<dbReference type="VEuPathDB" id="HostDB:ENSRNOG00000055093"/>
<dbReference type="eggNOG" id="ENOG502QR70">
    <property type="taxonomic scope" value="Eukaryota"/>
</dbReference>
<dbReference type="HOGENOM" id="CLU_039837_2_0_1"/>
<dbReference type="InParanoid" id="Q4V7C1"/>
<dbReference type="OrthoDB" id="2160638at2759"/>
<dbReference type="PhylomeDB" id="Q4V7C1"/>
<dbReference type="Reactome" id="R-RNO-2565942">
    <property type="pathway name" value="Regulation of PLK1 Activity at G2/M Transition"/>
</dbReference>
<dbReference type="Reactome" id="R-RNO-380259">
    <property type="pathway name" value="Loss of Nlp from mitotic centrosomes"/>
</dbReference>
<dbReference type="Reactome" id="R-RNO-380270">
    <property type="pathway name" value="Recruitment of mitotic centrosome proteins and complexes"/>
</dbReference>
<dbReference type="Reactome" id="R-RNO-380284">
    <property type="pathway name" value="Loss of proteins required for interphase microtubule organization from the centrosome"/>
</dbReference>
<dbReference type="Reactome" id="R-RNO-380320">
    <property type="pathway name" value="Recruitment of NuMA to mitotic centrosomes"/>
</dbReference>
<dbReference type="Reactome" id="R-RNO-5620912">
    <property type="pathway name" value="Anchoring of the basal body to the plasma membrane"/>
</dbReference>
<dbReference type="Reactome" id="R-RNO-8854518">
    <property type="pathway name" value="AURKA Activation by TPX2"/>
</dbReference>
<dbReference type="PRO" id="PR:Q4V7C1"/>
<dbReference type="Proteomes" id="UP000002494">
    <property type="component" value="Chromosome 1"/>
</dbReference>
<dbReference type="Bgee" id="ENSRNOG00000055093">
    <property type="expression patterns" value="Expressed in thymus and 20 other cell types or tissues"/>
</dbReference>
<dbReference type="GO" id="GO:0042995">
    <property type="term" value="C:cell projection"/>
    <property type="evidence" value="ECO:0007669"/>
    <property type="project" value="UniProtKB-KW"/>
</dbReference>
<dbReference type="GO" id="GO:0005814">
    <property type="term" value="C:centriole"/>
    <property type="evidence" value="ECO:0000266"/>
    <property type="project" value="RGD"/>
</dbReference>
<dbReference type="GO" id="GO:0005813">
    <property type="term" value="C:centrosome"/>
    <property type="evidence" value="ECO:0000266"/>
    <property type="project" value="RGD"/>
</dbReference>
<dbReference type="GO" id="GO:0005634">
    <property type="term" value="C:nucleus"/>
    <property type="evidence" value="ECO:0000266"/>
    <property type="project" value="RGD"/>
</dbReference>
<dbReference type="GO" id="GO:0048471">
    <property type="term" value="C:perinuclear region of cytoplasm"/>
    <property type="evidence" value="ECO:0000266"/>
    <property type="project" value="RGD"/>
</dbReference>
<dbReference type="GO" id="GO:0042803">
    <property type="term" value="F:protein homodimerization activity"/>
    <property type="evidence" value="ECO:0000266"/>
    <property type="project" value="RGD"/>
</dbReference>
<dbReference type="GO" id="GO:0019901">
    <property type="term" value="F:protein kinase binding"/>
    <property type="evidence" value="ECO:0000266"/>
    <property type="project" value="RGD"/>
</dbReference>
<dbReference type="GO" id="GO:0030292">
    <property type="term" value="F:protein tyrosine kinase inhibitor activity"/>
    <property type="evidence" value="ECO:0000266"/>
    <property type="project" value="RGD"/>
</dbReference>
<dbReference type="GO" id="GO:0030030">
    <property type="term" value="P:cell projection organization"/>
    <property type="evidence" value="ECO:0007669"/>
    <property type="project" value="UniProtKB-KW"/>
</dbReference>
<dbReference type="GO" id="GO:0034453">
    <property type="term" value="P:microtubule anchoring"/>
    <property type="evidence" value="ECO:0007669"/>
    <property type="project" value="InterPro"/>
</dbReference>
<dbReference type="GO" id="GO:0030307">
    <property type="term" value="P:positive regulation of cell growth"/>
    <property type="evidence" value="ECO:0000266"/>
    <property type="project" value="RGD"/>
</dbReference>
<dbReference type="GO" id="GO:0030335">
    <property type="term" value="P:positive regulation of cell migration"/>
    <property type="evidence" value="ECO:0000266"/>
    <property type="project" value="RGD"/>
</dbReference>
<dbReference type="GO" id="GO:0008284">
    <property type="term" value="P:positive regulation of cell population proliferation"/>
    <property type="evidence" value="ECO:0000266"/>
    <property type="project" value="RGD"/>
</dbReference>
<dbReference type="FunFam" id="1.20.960.40:FF:000001">
    <property type="entry name" value="FGFR1 oncogene partner"/>
    <property type="match status" value="1"/>
</dbReference>
<dbReference type="Gene3D" id="1.20.960.40">
    <property type="match status" value="1"/>
</dbReference>
<dbReference type="InterPro" id="IPR018993">
    <property type="entry name" value="FOP_dimerisation-dom_N"/>
</dbReference>
<dbReference type="InterPro" id="IPR006594">
    <property type="entry name" value="LisH"/>
</dbReference>
<dbReference type="PANTHER" id="PTHR15431:SF9">
    <property type="entry name" value="CENTROSOMAL PROTEIN 43"/>
    <property type="match status" value="1"/>
</dbReference>
<dbReference type="PANTHER" id="PTHR15431">
    <property type="entry name" value="FGFR1 ONCOGENE PARTNER/LISH DOMAIN-CONTAINING PROTEIN"/>
    <property type="match status" value="1"/>
</dbReference>
<dbReference type="Pfam" id="PF09398">
    <property type="entry name" value="FOP_dimer"/>
    <property type="match status" value="1"/>
</dbReference>
<dbReference type="PROSITE" id="PS50896">
    <property type="entry name" value="LISH"/>
    <property type="match status" value="1"/>
</dbReference>
<organism>
    <name type="scientific">Rattus norvegicus</name>
    <name type="common">Rat</name>
    <dbReference type="NCBI Taxonomy" id="10116"/>
    <lineage>
        <taxon>Eukaryota</taxon>
        <taxon>Metazoa</taxon>
        <taxon>Chordata</taxon>
        <taxon>Craniata</taxon>
        <taxon>Vertebrata</taxon>
        <taxon>Euteleostomi</taxon>
        <taxon>Mammalia</taxon>
        <taxon>Eutheria</taxon>
        <taxon>Euarchontoglires</taxon>
        <taxon>Glires</taxon>
        <taxon>Rodentia</taxon>
        <taxon>Myomorpha</taxon>
        <taxon>Muroidea</taxon>
        <taxon>Muridae</taxon>
        <taxon>Murinae</taxon>
        <taxon>Rattus</taxon>
    </lineage>
</organism>
<sequence>MAATTAAVVAEEDTELRDLLVQTLENSGVLNRIKAELRAAVFLALEEQEKVENKTPLVNESLKKFLNTKDGRLVASLVAEFLQFFNLDFTLAVFHPETSTIQGLEGRENLARDLGIIEAEGTVGGPLLLEVIRRCQQKEKGPTSVEGALDLSDGHPPSKSPEGKTSVNSTPSKIPRYKGQGKKKTSGQKSGDKKTSSETSQSEPSVSLSESKSKSSLHSLVHETRIASFLSNSTVDAKDKSALCPDEDDVEGDSFFDDPIPKPEKTYGWRSEPRKQVGGLASLSDKPHLRSGLSSLAGAPSLTDAESKRGSTVLKDLKLVGEKIGSLGLGSGEDEDYVDDFNSASHRSEKSELSIGEEIEEDLSMGVEDVNTSDKLDDLTQDLTVSQLSDVADYLEDVA</sequence>
<keyword id="KW-0966">Cell projection</keyword>
<keyword id="KW-0970">Cilium biogenesis/degradation</keyword>
<keyword id="KW-0963">Cytoplasm</keyword>
<keyword id="KW-0206">Cytoskeleton</keyword>
<keyword id="KW-0597">Phosphoprotein</keyword>
<keyword id="KW-1185">Reference proteome</keyword>